<accession>Q3K7V1</accession>
<gene>
    <name evidence="1" type="primary">slyX</name>
    <name type="ordered locus">Pfl01_4416</name>
</gene>
<evidence type="ECO:0000255" key="1">
    <source>
        <dbReference type="HAMAP-Rule" id="MF_00715"/>
    </source>
</evidence>
<protein>
    <recommendedName>
        <fullName evidence="1">Protein SlyX homolog</fullName>
    </recommendedName>
</protein>
<reference key="1">
    <citation type="journal article" date="2009" name="Genome Biol.">
        <title>Genomic and genetic analyses of diversity and plant interactions of Pseudomonas fluorescens.</title>
        <authorList>
            <person name="Silby M.W."/>
            <person name="Cerdeno-Tarraga A.M."/>
            <person name="Vernikos G.S."/>
            <person name="Giddens S.R."/>
            <person name="Jackson R.W."/>
            <person name="Preston G.M."/>
            <person name="Zhang X.-X."/>
            <person name="Moon C.D."/>
            <person name="Gehrig S.M."/>
            <person name="Godfrey S.A.C."/>
            <person name="Knight C.G."/>
            <person name="Malone J.G."/>
            <person name="Robinson Z."/>
            <person name="Spiers A.J."/>
            <person name="Harris S."/>
            <person name="Challis G.L."/>
            <person name="Yaxley A.M."/>
            <person name="Harris D."/>
            <person name="Seeger K."/>
            <person name="Murphy L."/>
            <person name="Rutter S."/>
            <person name="Squares R."/>
            <person name="Quail M.A."/>
            <person name="Saunders E."/>
            <person name="Mavromatis K."/>
            <person name="Brettin T.S."/>
            <person name="Bentley S.D."/>
            <person name="Hothersall J."/>
            <person name="Stephens E."/>
            <person name="Thomas C.M."/>
            <person name="Parkhill J."/>
            <person name="Levy S.B."/>
            <person name="Rainey P.B."/>
            <person name="Thomson N.R."/>
        </authorList>
    </citation>
    <scope>NUCLEOTIDE SEQUENCE [LARGE SCALE GENOMIC DNA]</scope>
    <source>
        <strain>Pf0-1</strain>
    </source>
</reference>
<feature type="chain" id="PRO_0000227075" description="Protein SlyX homolog">
    <location>
        <begin position="1"/>
        <end position="68"/>
    </location>
</feature>
<name>SLYX_PSEPF</name>
<organism>
    <name type="scientific">Pseudomonas fluorescens (strain Pf0-1)</name>
    <dbReference type="NCBI Taxonomy" id="205922"/>
    <lineage>
        <taxon>Bacteria</taxon>
        <taxon>Pseudomonadati</taxon>
        <taxon>Pseudomonadota</taxon>
        <taxon>Gammaproteobacteria</taxon>
        <taxon>Pseudomonadales</taxon>
        <taxon>Pseudomonadaceae</taxon>
        <taxon>Pseudomonas</taxon>
    </lineage>
</organism>
<dbReference type="EMBL" id="CP000094">
    <property type="protein sequence ID" value="ABA76153.1"/>
    <property type="molecule type" value="Genomic_DNA"/>
</dbReference>
<dbReference type="RefSeq" id="WP_007951214.1">
    <property type="nucleotide sequence ID" value="NC_007492.2"/>
</dbReference>
<dbReference type="SMR" id="Q3K7V1"/>
<dbReference type="KEGG" id="pfo:Pfl01_4416"/>
<dbReference type="eggNOG" id="COG2900">
    <property type="taxonomic scope" value="Bacteria"/>
</dbReference>
<dbReference type="HOGENOM" id="CLU_180796_4_1_6"/>
<dbReference type="Proteomes" id="UP000002704">
    <property type="component" value="Chromosome"/>
</dbReference>
<dbReference type="Gene3D" id="1.20.5.300">
    <property type="match status" value="1"/>
</dbReference>
<dbReference type="HAMAP" id="MF_00715">
    <property type="entry name" value="SlyX"/>
    <property type="match status" value="1"/>
</dbReference>
<dbReference type="InterPro" id="IPR007236">
    <property type="entry name" value="SlyX"/>
</dbReference>
<dbReference type="NCBIfam" id="NF001421">
    <property type="entry name" value="PRK00295.1"/>
    <property type="match status" value="1"/>
</dbReference>
<dbReference type="PANTHER" id="PTHR36508">
    <property type="entry name" value="PROTEIN SLYX"/>
    <property type="match status" value="1"/>
</dbReference>
<dbReference type="PANTHER" id="PTHR36508:SF1">
    <property type="entry name" value="PROTEIN SLYX"/>
    <property type="match status" value="1"/>
</dbReference>
<dbReference type="Pfam" id="PF04102">
    <property type="entry name" value="SlyX"/>
    <property type="match status" value="1"/>
</dbReference>
<comment type="similarity">
    <text evidence="1">Belongs to the SlyX family.</text>
</comment>
<proteinExistence type="inferred from homology"/>
<sequence length="68" mass="7889">MSLEQRVTELESRLAFQDDTIQALNDVLVEQQRVVERLQLQMAAVLKRQEEMVGQFGSFEEDAPPPHY</sequence>